<accession>B7M3R5</accession>
<proteinExistence type="inferred from homology"/>
<dbReference type="EMBL" id="CU928160">
    <property type="protein sequence ID" value="CAQ97298.1"/>
    <property type="molecule type" value="Genomic_DNA"/>
</dbReference>
<dbReference type="RefSeq" id="WP_001138904.1">
    <property type="nucleotide sequence ID" value="NC_011741.1"/>
</dbReference>
<dbReference type="SMR" id="B7M3R5"/>
<dbReference type="GeneID" id="93777034"/>
<dbReference type="KEGG" id="ecr:ECIAI1_0426"/>
<dbReference type="HOGENOM" id="CLU_099839_1_0_6"/>
<dbReference type="GO" id="GO:0005829">
    <property type="term" value="C:cytosol"/>
    <property type="evidence" value="ECO:0007669"/>
    <property type="project" value="TreeGrafter"/>
</dbReference>
<dbReference type="GO" id="GO:0000166">
    <property type="term" value="F:nucleotide binding"/>
    <property type="evidence" value="ECO:0007669"/>
    <property type="project" value="TreeGrafter"/>
</dbReference>
<dbReference type="CDD" id="cd11740">
    <property type="entry name" value="YajQ_like"/>
    <property type="match status" value="1"/>
</dbReference>
<dbReference type="FunFam" id="3.30.70.860:FF:000001">
    <property type="entry name" value="UPF0234 protein YajQ"/>
    <property type="match status" value="1"/>
</dbReference>
<dbReference type="FunFam" id="3.30.70.990:FF:000001">
    <property type="entry name" value="UPF0234 protein YajQ"/>
    <property type="match status" value="1"/>
</dbReference>
<dbReference type="Gene3D" id="3.30.70.860">
    <property type="match status" value="1"/>
</dbReference>
<dbReference type="Gene3D" id="3.30.70.990">
    <property type="entry name" value="YajQ-like, domain 2"/>
    <property type="match status" value="1"/>
</dbReference>
<dbReference type="HAMAP" id="MF_00632">
    <property type="entry name" value="YajQ"/>
    <property type="match status" value="1"/>
</dbReference>
<dbReference type="InterPro" id="IPR007551">
    <property type="entry name" value="DUF520"/>
</dbReference>
<dbReference type="InterPro" id="IPR035571">
    <property type="entry name" value="UPF0234-like_C"/>
</dbReference>
<dbReference type="InterPro" id="IPR035570">
    <property type="entry name" value="UPF0234_N"/>
</dbReference>
<dbReference type="InterPro" id="IPR036183">
    <property type="entry name" value="YajQ-like_sf"/>
</dbReference>
<dbReference type="NCBIfam" id="NF003819">
    <property type="entry name" value="PRK05412.1"/>
    <property type="match status" value="1"/>
</dbReference>
<dbReference type="PANTHER" id="PTHR30476">
    <property type="entry name" value="UPF0234 PROTEIN YAJQ"/>
    <property type="match status" value="1"/>
</dbReference>
<dbReference type="PANTHER" id="PTHR30476:SF0">
    <property type="entry name" value="UPF0234 PROTEIN YAJQ"/>
    <property type="match status" value="1"/>
</dbReference>
<dbReference type="Pfam" id="PF04461">
    <property type="entry name" value="DUF520"/>
    <property type="match status" value="1"/>
</dbReference>
<dbReference type="SUPFAM" id="SSF89963">
    <property type="entry name" value="YajQ-like"/>
    <property type="match status" value="2"/>
</dbReference>
<comment type="function">
    <text evidence="1">Nucleotide-binding protein.</text>
</comment>
<comment type="similarity">
    <text evidence="1">Belongs to the YajQ family.</text>
</comment>
<feature type="chain" id="PRO_1000130620" description="Nucleotide-binding protein YajQ">
    <location>
        <begin position="1"/>
        <end position="163"/>
    </location>
</feature>
<reference key="1">
    <citation type="journal article" date="2009" name="PLoS Genet.">
        <title>Organised genome dynamics in the Escherichia coli species results in highly diverse adaptive paths.</title>
        <authorList>
            <person name="Touchon M."/>
            <person name="Hoede C."/>
            <person name="Tenaillon O."/>
            <person name="Barbe V."/>
            <person name="Baeriswyl S."/>
            <person name="Bidet P."/>
            <person name="Bingen E."/>
            <person name="Bonacorsi S."/>
            <person name="Bouchier C."/>
            <person name="Bouvet O."/>
            <person name="Calteau A."/>
            <person name="Chiapello H."/>
            <person name="Clermont O."/>
            <person name="Cruveiller S."/>
            <person name="Danchin A."/>
            <person name="Diard M."/>
            <person name="Dossat C."/>
            <person name="Karoui M.E."/>
            <person name="Frapy E."/>
            <person name="Garry L."/>
            <person name="Ghigo J.M."/>
            <person name="Gilles A.M."/>
            <person name="Johnson J."/>
            <person name="Le Bouguenec C."/>
            <person name="Lescat M."/>
            <person name="Mangenot S."/>
            <person name="Martinez-Jehanne V."/>
            <person name="Matic I."/>
            <person name="Nassif X."/>
            <person name="Oztas S."/>
            <person name="Petit M.A."/>
            <person name="Pichon C."/>
            <person name="Rouy Z."/>
            <person name="Ruf C.S."/>
            <person name="Schneider D."/>
            <person name="Tourret J."/>
            <person name="Vacherie B."/>
            <person name="Vallenet D."/>
            <person name="Medigue C."/>
            <person name="Rocha E.P.C."/>
            <person name="Denamur E."/>
        </authorList>
    </citation>
    <scope>NUCLEOTIDE SEQUENCE [LARGE SCALE GENOMIC DNA]</scope>
    <source>
        <strain>IAI1</strain>
    </source>
</reference>
<protein>
    <recommendedName>
        <fullName evidence="1">Nucleotide-binding protein YajQ</fullName>
    </recommendedName>
</protein>
<keyword id="KW-0547">Nucleotide-binding</keyword>
<name>YAJQ_ECO8A</name>
<sequence length="163" mass="18344">MPSFDIVSEVDLQEARNAVDNASREVESRFDFRNVEASFELNDASKTIKVLSESDFQVNQLLDILRAKLLKRGIEGSSLDVPENIVHSGKTWFVEAKLKQGIESATQKKIVKMIKDSKLKVQAQIQGDEIRVTGKSRDDLQAVMAMVRGGDLGQPFQFKNFRD</sequence>
<gene>
    <name evidence="1" type="primary">yajQ</name>
    <name type="ordered locus">ECIAI1_0426</name>
</gene>
<organism>
    <name type="scientific">Escherichia coli O8 (strain IAI1)</name>
    <dbReference type="NCBI Taxonomy" id="585034"/>
    <lineage>
        <taxon>Bacteria</taxon>
        <taxon>Pseudomonadati</taxon>
        <taxon>Pseudomonadota</taxon>
        <taxon>Gammaproteobacteria</taxon>
        <taxon>Enterobacterales</taxon>
        <taxon>Enterobacteriaceae</taxon>
        <taxon>Escherichia</taxon>
    </lineage>
</organism>
<evidence type="ECO:0000255" key="1">
    <source>
        <dbReference type="HAMAP-Rule" id="MF_00632"/>
    </source>
</evidence>